<reference key="1">
    <citation type="journal article" date="2007" name="Nature">
        <title>Evolution of genes and genomes on the Drosophila phylogeny.</title>
        <authorList>
            <consortium name="Drosophila 12 genomes consortium"/>
        </authorList>
    </citation>
    <scope>NUCLEOTIDE SEQUENCE [LARGE SCALE GENOMIC DNA]</scope>
    <source>
        <strain>Tucson 15287-2541.00</strain>
    </source>
</reference>
<name>PTER_DROGR</name>
<evidence type="ECO:0000250" key="1">
    <source>
        <dbReference type="UniProtKB" id="P45548"/>
    </source>
</evidence>
<evidence type="ECO:0000255" key="2">
    <source>
        <dbReference type="PROSITE-ProRule" id="PRU00679"/>
    </source>
</evidence>
<keyword id="KW-0378">Hydrolase</keyword>
<keyword id="KW-0479">Metal-binding</keyword>
<keyword id="KW-1185">Reference proteome</keyword>
<accession>B4J340</accession>
<feature type="chain" id="PRO_0000388675" description="Phosphotriesterase-related protein">
    <location>
        <begin position="1"/>
        <end position="350"/>
    </location>
</feature>
<feature type="binding site" evidence="1">
    <location>
        <position position="22"/>
    </location>
    <ligand>
        <name>a divalent metal cation</name>
        <dbReference type="ChEBI" id="CHEBI:60240"/>
        <label>1</label>
    </ligand>
</feature>
<feature type="binding site" evidence="1">
    <location>
        <position position="24"/>
    </location>
    <ligand>
        <name>a divalent metal cation</name>
        <dbReference type="ChEBI" id="CHEBI:60240"/>
        <label>1</label>
    </ligand>
</feature>
<feature type="binding site" evidence="1">
    <location>
        <position position="169"/>
    </location>
    <ligand>
        <name>a divalent metal cation</name>
        <dbReference type="ChEBI" id="CHEBI:60240"/>
        <label>1</label>
    </ligand>
</feature>
<feature type="binding site" evidence="1">
    <location>
        <position position="169"/>
    </location>
    <ligand>
        <name>a divalent metal cation</name>
        <dbReference type="ChEBI" id="CHEBI:60240"/>
        <label>2</label>
    </ligand>
</feature>
<feature type="binding site" evidence="1">
    <location>
        <position position="201"/>
    </location>
    <ligand>
        <name>a divalent metal cation</name>
        <dbReference type="ChEBI" id="CHEBI:60240"/>
        <label>2</label>
    </ligand>
</feature>
<feature type="binding site" evidence="1">
    <location>
        <position position="230"/>
    </location>
    <ligand>
        <name>a divalent metal cation</name>
        <dbReference type="ChEBI" id="CHEBI:60240"/>
        <label>2</label>
    </ligand>
</feature>
<feature type="binding site" evidence="1">
    <location>
        <position position="298"/>
    </location>
    <ligand>
        <name>a divalent metal cation</name>
        <dbReference type="ChEBI" id="CHEBI:60240"/>
        <label>1</label>
    </ligand>
</feature>
<proteinExistence type="inferred from homology"/>
<sequence length="350" mass="39559">MARIQTVLGSITPNLLGRTLTHEHVAMDFEHFYKPPPADFQSELEQKISMATLGYVRLYPYSSKENVRFYDEEALEASRKDVLLYKKHGGGAIVENSSYGLKRNLEFIVDLAKTTGVHFIAGTGHYIHATQDASHKNLTVEQMTDLYSKDILTGIEVNGRMVKSGFIGEVASVYPVQEFERHSLLAAGEIQEVLGCGVSLHPHRVSKAPFEILRLYLEAGGRANKCVMSHLDRTLFDMDELLEFAKMGCYLQYDLFGTECSYYQLNSAVDMISDGQRIDNIIKLINEGLVDRLLMSHDIHTKHRLTSYGGHGYHHIHMNILPRMFQRGVTLDQVEQMTVTNPANWLSFSA</sequence>
<comment type="cofactor">
    <cofactor evidence="1">
        <name>a divalent metal cation</name>
        <dbReference type="ChEBI" id="CHEBI:60240"/>
    </cofactor>
    <text evidence="1">Binds 2 divalent metal cations per subunit.</text>
</comment>
<comment type="similarity">
    <text evidence="2">Belongs to the metallo-dependent hydrolases superfamily. Phosphotriesterase family.</text>
</comment>
<organism>
    <name type="scientific">Drosophila grimshawi</name>
    <name type="common">Hawaiian fruit fly</name>
    <name type="synonym">Idiomyia grimshawi</name>
    <dbReference type="NCBI Taxonomy" id="7222"/>
    <lineage>
        <taxon>Eukaryota</taxon>
        <taxon>Metazoa</taxon>
        <taxon>Ecdysozoa</taxon>
        <taxon>Arthropoda</taxon>
        <taxon>Hexapoda</taxon>
        <taxon>Insecta</taxon>
        <taxon>Pterygota</taxon>
        <taxon>Neoptera</taxon>
        <taxon>Endopterygota</taxon>
        <taxon>Diptera</taxon>
        <taxon>Brachycera</taxon>
        <taxon>Muscomorpha</taxon>
        <taxon>Ephydroidea</taxon>
        <taxon>Drosophilidae</taxon>
        <taxon>Drosophila</taxon>
        <taxon>Hawaiian Drosophila</taxon>
    </lineage>
</organism>
<dbReference type="EC" id="3.1.-.-"/>
<dbReference type="EMBL" id="CH916366">
    <property type="protein sequence ID" value="EDV96111.1"/>
    <property type="molecule type" value="Genomic_DNA"/>
</dbReference>
<dbReference type="SMR" id="B4J340"/>
<dbReference type="FunCoup" id="B4J340">
    <property type="interactions" value="1"/>
</dbReference>
<dbReference type="STRING" id="7222.B4J340"/>
<dbReference type="EnsemblMetazoa" id="FBtr0151489">
    <property type="protein sequence ID" value="FBpp0149981"/>
    <property type="gene ID" value="FBgn0123546"/>
</dbReference>
<dbReference type="EnsemblMetazoa" id="XM_001983727.3">
    <property type="protein sequence ID" value="XP_001983763.1"/>
    <property type="gene ID" value="LOC6557407"/>
</dbReference>
<dbReference type="GeneID" id="6557407"/>
<dbReference type="KEGG" id="dgr:6557407"/>
<dbReference type="eggNOG" id="ENOG502QQQR">
    <property type="taxonomic scope" value="Eukaryota"/>
</dbReference>
<dbReference type="HOGENOM" id="CLU_054760_0_1_1"/>
<dbReference type="InParanoid" id="B4J340"/>
<dbReference type="OMA" id="MVKCGFI"/>
<dbReference type="OrthoDB" id="9998343at2759"/>
<dbReference type="PhylomeDB" id="B4J340"/>
<dbReference type="Proteomes" id="UP000001070">
    <property type="component" value="Unassembled WGS sequence"/>
</dbReference>
<dbReference type="GO" id="GO:0016788">
    <property type="term" value="F:hydrolase activity, acting on ester bonds"/>
    <property type="evidence" value="ECO:0007669"/>
    <property type="project" value="InterPro"/>
</dbReference>
<dbReference type="GO" id="GO:0008270">
    <property type="term" value="F:zinc ion binding"/>
    <property type="evidence" value="ECO:0007669"/>
    <property type="project" value="InterPro"/>
</dbReference>
<dbReference type="GO" id="GO:0009056">
    <property type="term" value="P:catabolic process"/>
    <property type="evidence" value="ECO:0007669"/>
    <property type="project" value="InterPro"/>
</dbReference>
<dbReference type="CDD" id="cd00530">
    <property type="entry name" value="PTE"/>
    <property type="match status" value="1"/>
</dbReference>
<dbReference type="Gene3D" id="3.20.20.140">
    <property type="entry name" value="Metal-dependent hydrolases"/>
    <property type="match status" value="1"/>
</dbReference>
<dbReference type="InterPro" id="IPR017947">
    <property type="entry name" value="AryldialkylPase_Zn-BS"/>
</dbReference>
<dbReference type="InterPro" id="IPR032466">
    <property type="entry name" value="Metal_Hydrolase"/>
</dbReference>
<dbReference type="InterPro" id="IPR001559">
    <property type="entry name" value="Phosphotriesterase"/>
</dbReference>
<dbReference type="PANTHER" id="PTHR10819">
    <property type="entry name" value="PHOSPHOTRIESTERASE-RELATED"/>
    <property type="match status" value="1"/>
</dbReference>
<dbReference type="PANTHER" id="PTHR10819:SF3">
    <property type="entry name" value="PHOSPHOTRIESTERASE-RELATED PROTEIN"/>
    <property type="match status" value="1"/>
</dbReference>
<dbReference type="Pfam" id="PF02126">
    <property type="entry name" value="PTE"/>
    <property type="match status" value="1"/>
</dbReference>
<dbReference type="SUPFAM" id="SSF51556">
    <property type="entry name" value="Metallo-dependent hydrolases"/>
    <property type="match status" value="1"/>
</dbReference>
<dbReference type="PROSITE" id="PS01322">
    <property type="entry name" value="PHOSPHOTRIESTERASE_1"/>
    <property type="match status" value="1"/>
</dbReference>
<dbReference type="PROSITE" id="PS51347">
    <property type="entry name" value="PHOSPHOTRIESTERASE_2"/>
    <property type="match status" value="1"/>
</dbReference>
<gene>
    <name type="ORF">GH16075</name>
</gene>
<protein>
    <recommendedName>
        <fullName>Phosphotriesterase-related protein</fullName>
        <ecNumber>3.1.-.-</ecNumber>
    </recommendedName>
    <alternativeName>
        <fullName>Parathion hydrolase-related protein</fullName>
    </alternativeName>
</protein>